<feature type="chain" id="PRO_1000066106" description="D-amino acid dehydrogenase">
    <location>
        <begin position="1"/>
        <end position="432"/>
    </location>
</feature>
<feature type="binding site" evidence="1">
    <location>
        <begin position="3"/>
        <end position="17"/>
    </location>
    <ligand>
        <name>FAD</name>
        <dbReference type="ChEBI" id="CHEBI:57692"/>
    </ligand>
</feature>
<keyword id="KW-0274">FAD</keyword>
<keyword id="KW-0285">Flavoprotein</keyword>
<keyword id="KW-0560">Oxidoreductase</keyword>
<proteinExistence type="inferred from homology"/>
<protein>
    <recommendedName>
        <fullName evidence="1">D-amino acid dehydrogenase</fullName>
        <ecNumber evidence="1">1.4.99.-</ecNumber>
    </recommendedName>
</protein>
<reference key="1">
    <citation type="submission" date="2007-04" db="EMBL/GenBank/DDBJ databases">
        <title>Complete sequence of Pseudomonas mendocina ymp.</title>
        <authorList>
            <consortium name="US DOE Joint Genome Institute"/>
            <person name="Copeland A."/>
            <person name="Lucas S."/>
            <person name="Lapidus A."/>
            <person name="Barry K."/>
            <person name="Glavina del Rio T."/>
            <person name="Dalin E."/>
            <person name="Tice H."/>
            <person name="Pitluck S."/>
            <person name="Kiss H."/>
            <person name="Brettin T."/>
            <person name="Detter J.C."/>
            <person name="Bruce D."/>
            <person name="Han C."/>
            <person name="Schmutz J."/>
            <person name="Larimer F."/>
            <person name="Land M."/>
            <person name="Hauser L."/>
            <person name="Kyrpides N."/>
            <person name="Mikhailova N."/>
            <person name="Hersman L."/>
            <person name="Dubois J."/>
            <person name="Maurice P."/>
            <person name="Richardson P."/>
        </authorList>
    </citation>
    <scope>NUCLEOTIDE SEQUENCE [LARGE SCALE GENOMIC DNA]</scope>
    <source>
        <strain>ymp</strain>
    </source>
</reference>
<accession>A4XNV3</accession>
<dbReference type="EC" id="1.4.99.-" evidence="1"/>
<dbReference type="EMBL" id="CP000680">
    <property type="protein sequence ID" value="ABP83019.1"/>
    <property type="molecule type" value="Genomic_DNA"/>
</dbReference>
<dbReference type="SMR" id="A4XNV3"/>
<dbReference type="STRING" id="399739.Pmen_0245"/>
<dbReference type="KEGG" id="pmy:Pmen_0245"/>
<dbReference type="PATRIC" id="fig|399739.8.peg.249"/>
<dbReference type="eggNOG" id="COG0665">
    <property type="taxonomic scope" value="Bacteria"/>
</dbReference>
<dbReference type="HOGENOM" id="CLU_007884_9_2_6"/>
<dbReference type="OrthoDB" id="9805337at2"/>
<dbReference type="UniPathway" id="UPA00043">
    <property type="reaction ID" value="UER00498"/>
</dbReference>
<dbReference type="GO" id="GO:0005737">
    <property type="term" value="C:cytoplasm"/>
    <property type="evidence" value="ECO:0007669"/>
    <property type="project" value="TreeGrafter"/>
</dbReference>
<dbReference type="GO" id="GO:0005886">
    <property type="term" value="C:plasma membrane"/>
    <property type="evidence" value="ECO:0007669"/>
    <property type="project" value="TreeGrafter"/>
</dbReference>
<dbReference type="GO" id="GO:0008718">
    <property type="term" value="F:D-amino-acid dehydrogenase activity"/>
    <property type="evidence" value="ECO:0007669"/>
    <property type="project" value="UniProtKB-UniRule"/>
</dbReference>
<dbReference type="GO" id="GO:0055130">
    <property type="term" value="P:D-alanine catabolic process"/>
    <property type="evidence" value="ECO:0007669"/>
    <property type="project" value="UniProtKB-UniPathway"/>
</dbReference>
<dbReference type="FunFam" id="3.50.50.60:FF:000020">
    <property type="entry name" value="D-amino acid dehydrogenase"/>
    <property type="match status" value="1"/>
</dbReference>
<dbReference type="Gene3D" id="3.30.9.10">
    <property type="entry name" value="D-Amino Acid Oxidase, subunit A, domain 2"/>
    <property type="match status" value="1"/>
</dbReference>
<dbReference type="Gene3D" id="3.50.50.60">
    <property type="entry name" value="FAD/NAD(P)-binding domain"/>
    <property type="match status" value="2"/>
</dbReference>
<dbReference type="HAMAP" id="MF_01202">
    <property type="entry name" value="DadA"/>
    <property type="match status" value="1"/>
</dbReference>
<dbReference type="InterPro" id="IPR023080">
    <property type="entry name" value="DadA"/>
</dbReference>
<dbReference type="InterPro" id="IPR006076">
    <property type="entry name" value="FAD-dep_OxRdtase"/>
</dbReference>
<dbReference type="InterPro" id="IPR036188">
    <property type="entry name" value="FAD/NAD-bd_sf"/>
</dbReference>
<dbReference type="NCBIfam" id="NF001933">
    <property type="entry name" value="PRK00711.1"/>
    <property type="match status" value="1"/>
</dbReference>
<dbReference type="PANTHER" id="PTHR13847:SF280">
    <property type="entry name" value="D-AMINO ACID DEHYDROGENASE"/>
    <property type="match status" value="1"/>
</dbReference>
<dbReference type="PANTHER" id="PTHR13847">
    <property type="entry name" value="SARCOSINE DEHYDROGENASE-RELATED"/>
    <property type="match status" value="1"/>
</dbReference>
<dbReference type="Pfam" id="PF01266">
    <property type="entry name" value="DAO"/>
    <property type="match status" value="1"/>
</dbReference>
<dbReference type="SUPFAM" id="SSF54373">
    <property type="entry name" value="FAD-linked reductases, C-terminal domain"/>
    <property type="match status" value="1"/>
</dbReference>
<dbReference type="SUPFAM" id="SSF51905">
    <property type="entry name" value="FAD/NAD(P)-binding domain"/>
    <property type="match status" value="1"/>
</dbReference>
<sequence>MRVLVLGSGVIGTASAYYLARQGHEVVVVDRQNGPALETSFANAGQVSPGYASPWAAPGVPLKAIKWLLQKHAPLAIKATGDVDQYLWMAQMLRNCTAARYAVNKERMVRLSEYSRDCLDELRAETGIAYEGRQLGTTQLFRTQAQVDAAAKDIAVLEASGVPFELLDRDAIARVEPALAGVKHKLAGALRLPNDQTGDCQMFTTKLADMAKALGVEFRFGQNIQRLDAVGDRLNGVWIDGKLETADRYVLALGSYSPQLLKPLGVRAPVYPLKGYSLTVPITNAEMAPTSTILDETYKVAITRFDNRIRVGGMAEIAGFDLSLNPRRRETLEMITADLYPQGGDLSQAEFWTGLRPATPDGTPIVGATAYRNLFLNTGHGTLGWTMACGSGRLLADLIGSKRPQISAEGLDISRYSGKNRELEAAPQPLRT</sequence>
<name>DADA_ECTM1</name>
<evidence type="ECO:0000255" key="1">
    <source>
        <dbReference type="HAMAP-Rule" id="MF_01202"/>
    </source>
</evidence>
<gene>
    <name evidence="1" type="primary">dadA</name>
    <name type="ordered locus">Pmen_0245</name>
</gene>
<organism>
    <name type="scientific">Ectopseudomonas mendocina (strain ymp)</name>
    <name type="common">Pseudomonas mendocina</name>
    <dbReference type="NCBI Taxonomy" id="399739"/>
    <lineage>
        <taxon>Bacteria</taxon>
        <taxon>Pseudomonadati</taxon>
        <taxon>Pseudomonadota</taxon>
        <taxon>Gammaproteobacteria</taxon>
        <taxon>Pseudomonadales</taxon>
        <taxon>Pseudomonadaceae</taxon>
        <taxon>Ectopseudomonas</taxon>
    </lineage>
</organism>
<comment type="function">
    <text evidence="1">Oxidative deamination of D-amino acids.</text>
</comment>
<comment type="catalytic activity">
    <reaction evidence="1">
        <text>a D-alpha-amino acid + A + H2O = a 2-oxocarboxylate + AH2 + NH4(+)</text>
        <dbReference type="Rhea" id="RHEA:18125"/>
        <dbReference type="ChEBI" id="CHEBI:13193"/>
        <dbReference type="ChEBI" id="CHEBI:15377"/>
        <dbReference type="ChEBI" id="CHEBI:17499"/>
        <dbReference type="ChEBI" id="CHEBI:28938"/>
        <dbReference type="ChEBI" id="CHEBI:35179"/>
        <dbReference type="ChEBI" id="CHEBI:59871"/>
    </reaction>
</comment>
<comment type="cofactor">
    <cofactor evidence="1">
        <name>FAD</name>
        <dbReference type="ChEBI" id="CHEBI:57692"/>
    </cofactor>
</comment>
<comment type="pathway">
    <text>Amino-acid degradation; D-alanine degradation; NH(3) and pyruvate from D-alanine: step 1/1.</text>
</comment>
<comment type="similarity">
    <text evidence="1">Belongs to the DadA oxidoreductase family.</text>
</comment>